<keyword id="KW-0963">Cytoplasm</keyword>
<keyword id="KW-0690">Ribosome biogenesis</keyword>
<accession>A1JIX0</accession>
<proteinExistence type="inferred from homology"/>
<protein>
    <recommendedName>
        <fullName evidence="1">Ribosome-binding factor A</fullName>
    </recommendedName>
</protein>
<comment type="function">
    <text evidence="1">One of several proteins that assist in the late maturation steps of the functional core of the 30S ribosomal subunit. Associates with free 30S ribosomal subunits (but not with 30S subunits that are part of 70S ribosomes or polysomes). Required for efficient processing of 16S rRNA. May interact with the 5'-terminal helix region of 16S rRNA.</text>
</comment>
<comment type="subunit">
    <text evidence="1">Monomer. Binds 30S ribosomal subunits, but not 50S ribosomal subunits or 70S ribosomes.</text>
</comment>
<comment type="subcellular location">
    <subcellularLocation>
        <location evidence="1">Cytoplasm</location>
    </subcellularLocation>
</comment>
<comment type="similarity">
    <text evidence="1">Belongs to the RbfA family.</text>
</comment>
<gene>
    <name evidence="1" type="primary">rbfA</name>
    <name type="ordered locus">YE0435</name>
</gene>
<evidence type="ECO:0000255" key="1">
    <source>
        <dbReference type="HAMAP-Rule" id="MF_00003"/>
    </source>
</evidence>
<name>RBFA_YERE8</name>
<reference key="1">
    <citation type="journal article" date="2006" name="PLoS Genet.">
        <title>The complete genome sequence and comparative genome analysis of the high pathogenicity Yersinia enterocolitica strain 8081.</title>
        <authorList>
            <person name="Thomson N.R."/>
            <person name="Howard S."/>
            <person name="Wren B.W."/>
            <person name="Holden M.T.G."/>
            <person name="Crossman L."/>
            <person name="Challis G.L."/>
            <person name="Churcher C."/>
            <person name="Mungall K."/>
            <person name="Brooks K."/>
            <person name="Chillingworth T."/>
            <person name="Feltwell T."/>
            <person name="Abdellah Z."/>
            <person name="Hauser H."/>
            <person name="Jagels K."/>
            <person name="Maddison M."/>
            <person name="Moule S."/>
            <person name="Sanders M."/>
            <person name="Whitehead S."/>
            <person name="Quail M.A."/>
            <person name="Dougan G."/>
            <person name="Parkhill J."/>
            <person name="Prentice M.B."/>
        </authorList>
    </citation>
    <scope>NUCLEOTIDE SEQUENCE [LARGE SCALE GENOMIC DNA]</scope>
    <source>
        <strain>NCTC 13174 / 8081</strain>
    </source>
</reference>
<sequence>MAKEFSRSQRVSQEMQKEIALILQREIKDPRVGMATVSGIELSRDLAYAKVFVTFLNVLTDNADPDTVKNGIKALQDASGYIRTLLGKAMRLRIVPELTFAYDNSLIEGMRMSNLVTNVIKNDVERQVNPGSDEEK</sequence>
<feature type="chain" id="PRO_1000000247" description="Ribosome-binding factor A">
    <location>
        <begin position="1"/>
        <end position="136"/>
    </location>
</feature>
<organism>
    <name type="scientific">Yersinia enterocolitica serotype O:8 / biotype 1B (strain NCTC 13174 / 8081)</name>
    <dbReference type="NCBI Taxonomy" id="393305"/>
    <lineage>
        <taxon>Bacteria</taxon>
        <taxon>Pseudomonadati</taxon>
        <taxon>Pseudomonadota</taxon>
        <taxon>Gammaproteobacteria</taxon>
        <taxon>Enterobacterales</taxon>
        <taxon>Yersiniaceae</taxon>
        <taxon>Yersinia</taxon>
    </lineage>
</organism>
<dbReference type="EMBL" id="AM286415">
    <property type="protein sequence ID" value="CAL10561.1"/>
    <property type="molecule type" value="Genomic_DNA"/>
</dbReference>
<dbReference type="RefSeq" id="WP_005175393.1">
    <property type="nucleotide sequence ID" value="NC_008800.1"/>
</dbReference>
<dbReference type="RefSeq" id="YP_001004805.1">
    <property type="nucleotide sequence ID" value="NC_008800.1"/>
</dbReference>
<dbReference type="SMR" id="A1JIX0"/>
<dbReference type="GeneID" id="93968916"/>
<dbReference type="KEGG" id="yen:YE0435"/>
<dbReference type="PATRIC" id="fig|393305.7.peg.531"/>
<dbReference type="eggNOG" id="COG0858">
    <property type="taxonomic scope" value="Bacteria"/>
</dbReference>
<dbReference type="HOGENOM" id="CLU_089475_5_0_6"/>
<dbReference type="OrthoDB" id="307788at2"/>
<dbReference type="Proteomes" id="UP000000642">
    <property type="component" value="Chromosome"/>
</dbReference>
<dbReference type="GO" id="GO:0005829">
    <property type="term" value="C:cytosol"/>
    <property type="evidence" value="ECO:0007669"/>
    <property type="project" value="TreeGrafter"/>
</dbReference>
<dbReference type="GO" id="GO:0043024">
    <property type="term" value="F:ribosomal small subunit binding"/>
    <property type="evidence" value="ECO:0007669"/>
    <property type="project" value="TreeGrafter"/>
</dbReference>
<dbReference type="GO" id="GO:0030490">
    <property type="term" value="P:maturation of SSU-rRNA"/>
    <property type="evidence" value="ECO:0007669"/>
    <property type="project" value="UniProtKB-UniRule"/>
</dbReference>
<dbReference type="FunFam" id="3.30.300.20:FF:000007">
    <property type="entry name" value="Ribosome-binding factor A"/>
    <property type="match status" value="1"/>
</dbReference>
<dbReference type="Gene3D" id="3.30.300.20">
    <property type="match status" value="1"/>
</dbReference>
<dbReference type="HAMAP" id="MF_00003">
    <property type="entry name" value="RbfA"/>
    <property type="match status" value="1"/>
</dbReference>
<dbReference type="InterPro" id="IPR015946">
    <property type="entry name" value="KH_dom-like_a/b"/>
</dbReference>
<dbReference type="InterPro" id="IPR000238">
    <property type="entry name" value="RbfA"/>
</dbReference>
<dbReference type="InterPro" id="IPR023799">
    <property type="entry name" value="RbfA_dom_sf"/>
</dbReference>
<dbReference type="InterPro" id="IPR020053">
    <property type="entry name" value="Ribosome-bd_factorA_CS"/>
</dbReference>
<dbReference type="NCBIfam" id="TIGR00082">
    <property type="entry name" value="rbfA"/>
    <property type="match status" value="1"/>
</dbReference>
<dbReference type="PANTHER" id="PTHR33515">
    <property type="entry name" value="RIBOSOME-BINDING FACTOR A, CHLOROPLASTIC-RELATED"/>
    <property type="match status" value="1"/>
</dbReference>
<dbReference type="PANTHER" id="PTHR33515:SF1">
    <property type="entry name" value="RIBOSOME-BINDING FACTOR A, CHLOROPLASTIC-RELATED"/>
    <property type="match status" value="1"/>
</dbReference>
<dbReference type="Pfam" id="PF02033">
    <property type="entry name" value="RBFA"/>
    <property type="match status" value="1"/>
</dbReference>
<dbReference type="SUPFAM" id="SSF89919">
    <property type="entry name" value="Ribosome-binding factor A, RbfA"/>
    <property type="match status" value="1"/>
</dbReference>
<dbReference type="PROSITE" id="PS01319">
    <property type="entry name" value="RBFA"/>
    <property type="match status" value="1"/>
</dbReference>